<reference evidence="5" key="1">
    <citation type="journal article" date="2019" name="J. Venom. Anim. Toxins Incl. Trop. Dis.">
        <title>Subproteome of Lachesis muta rhombeata venom and preliminary studies on LmrSP-4, a novel snake venom serine proteinase.</title>
        <authorList>
            <person name="Wiezel G.A."/>
            <person name="Bordon K.C."/>
            <person name="Silva R.R."/>
            <person name="Gomes M.S."/>
            <person name="Cabral H."/>
            <person name="Rodrigues V.M."/>
            <person name="Ueberheide B."/>
            <person name="Arantes E.C."/>
        </authorList>
    </citation>
    <scope>PROTEIN SEQUENCE</scope>
    <scope>SUBCELLULAR LOCATION</scope>
    <source>
        <tissue evidence="4">Venom</tissue>
    </source>
</reference>
<comment type="function">
    <text evidence="1">Thrombin-like snake venom serine protease that cleaves alpha-chain of fibrinogen (FGA) releases only fibrinopeptide A. Shows coagulant, esterase and amidase activities.</text>
</comment>
<comment type="subcellular location">
    <subcellularLocation>
        <location evidence="3">Secreted</location>
    </subcellularLocation>
</comment>
<comment type="tissue specificity">
    <text evidence="6">Expressed by the venom gland.</text>
</comment>
<comment type="similarity">
    <text evidence="5">Belongs to the peptidase S1 family. Snake venom subfamily.</text>
</comment>
<keyword id="KW-1204">Blood coagulation cascade activating toxin</keyword>
<keyword id="KW-0903">Direct protein sequencing</keyword>
<keyword id="KW-1206">Fibrinogenolytic toxin</keyword>
<keyword id="KW-1199">Hemostasis impairing toxin</keyword>
<keyword id="KW-0378">Hydrolase</keyword>
<keyword id="KW-0645">Protease</keyword>
<keyword id="KW-0964">Secreted</keyword>
<keyword id="KW-0720">Serine protease</keyword>
<keyword id="KW-0800">Toxin</keyword>
<sequence length="26" mass="2944">IVGGDECNINEHRFLVALYDPDGFFC</sequence>
<organism evidence="4">
    <name type="scientific">Lachesis muta rhombeata</name>
    <name type="common">Bushmaster</name>
    <dbReference type="NCBI Taxonomy" id="60219"/>
    <lineage>
        <taxon>Eukaryota</taxon>
        <taxon>Metazoa</taxon>
        <taxon>Chordata</taxon>
        <taxon>Craniata</taxon>
        <taxon>Vertebrata</taxon>
        <taxon>Euteleostomi</taxon>
        <taxon>Lepidosauria</taxon>
        <taxon>Squamata</taxon>
        <taxon>Bifurcata</taxon>
        <taxon>Unidentata</taxon>
        <taxon>Episquamata</taxon>
        <taxon>Toxicofera</taxon>
        <taxon>Serpentes</taxon>
        <taxon>Colubroidea</taxon>
        <taxon>Viperidae</taxon>
        <taxon>Crotalinae</taxon>
        <taxon>Lachesis</taxon>
    </lineage>
</organism>
<dbReference type="EC" id="3.4.21.-" evidence="2"/>
<dbReference type="SMR" id="C0HLA2"/>
<dbReference type="GO" id="GO:0005576">
    <property type="term" value="C:extracellular region"/>
    <property type="evidence" value="ECO:0007669"/>
    <property type="project" value="UniProtKB-SubCell"/>
</dbReference>
<dbReference type="GO" id="GO:0008236">
    <property type="term" value="F:serine-type peptidase activity"/>
    <property type="evidence" value="ECO:0007669"/>
    <property type="project" value="UniProtKB-KW"/>
</dbReference>
<dbReference type="GO" id="GO:0090729">
    <property type="term" value="F:toxin activity"/>
    <property type="evidence" value="ECO:0007669"/>
    <property type="project" value="UniProtKB-KW"/>
</dbReference>
<dbReference type="GO" id="GO:0006508">
    <property type="term" value="P:proteolysis"/>
    <property type="evidence" value="ECO:0007669"/>
    <property type="project" value="UniProtKB-KW"/>
</dbReference>
<accession>C0HLA2</accession>
<feature type="chain" id="PRO_0000447686" description="Thrombin-like enzyme LmrSP-3">
    <location>
        <begin position="1"/>
        <end position="26" status="greater than"/>
    </location>
</feature>
<feature type="non-terminal residue" evidence="6">
    <location>
        <position position="26"/>
    </location>
</feature>
<evidence type="ECO:0000250" key="1">
    <source>
        <dbReference type="UniProtKB" id="P33589"/>
    </source>
</evidence>
<evidence type="ECO:0000250" key="2">
    <source>
        <dbReference type="UniProtKB" id="Q91053"/>
    </source>
</evidence>
<evidence type="ECO:0000269" key="3">
    <source>
    </source>
</evidence>
<evidence type="ECO:0000303" key="4">
    <source>
    </source>
</evidence>
<evidence type="ECO:0000305" key="5"/>
<evidence type="ECO:0000305" key="6">
    <source>
    </source>
</evidence>
<protein>
    <recommendedName>
        <fullName evidence="4">Thrombin-like enzyme LmrSP-3</fullName>
        <shortName evidence="5">SVTLE</shortName>
        <ecNumber evidence="2">3.4.21.-</ecNumber>
    </recommendedName>
    <alternativeName>
        <fullName evidence="5">Snake venom serine protease</fullName>
        <shortName evidence="5">SVSP</shortName>
    </alternativeName>
</protein>
<proteinExistence type="evidence at protein level"/>
<name>VSP3_LACMR</name>